<feature type="chain" id="PRO_0000254704" description="Cytochrome b">
    <location>
        <begin position="1"/>
        <end position="379"/>
    </location>
</feature>
<feature type="transmembrane region" description="Helical" evidence="2">
    <location>
        <begin position="33"/>
        <end position="53"/>
    </location>
</feature>
<feature type="transmembrane region" description="Helical" evidence="2">
    <location>
        <begin position="77"/>
        <end position="98"/>
    </location>
</feature>
<feature type="transmembrane region" description="Helical" evidence="2">
    <location>
        <begin position="113"/>
        <end position="133"/>
    </location>
</feature>
<feature type="transmembrane region" description="Helical" evidence="2">
    <location>
        <begin position="178"/>
        <end position="198"/>
    </location>
</feature>
<feature type="transmembrane region" description="Helical" evidence="2">
    <location>
        <begin position="226"/>
        <end position="246"/>
    </location>
</feature>
<feature type="transmembrane region" description="Helical" evidence="2">
    <location>
        <begin position="288"/>
        <end position="308"/>
    </location>
</feature>
<feature type="transmembrane region" description="Helical" evidence="2">
    <location>
        <begin position="320"/>
        <end position="340"/>
    </location>
</feature>
<feature type="transmembrane region" description="Helical" evidence="2">
    <location>
        <begin position="347"/>
        <end position="367"/>
    </location>
</feature>
<feature type="binding site" description="axial binding residue" evidence="2">
    <location>
        <position position="83"/>
    </location>
    <ligand>
        <name>heme b</name>
        <dbReference type="ChEBI" id="CHEBI:60344"/>
        <label>b562</label>
    </ligand>
    <ligandPart>
        <name>Fe</name>
        <dbReference type="ChEBI" id="CHEBI:18248"/>
    </ligandPart>
</feature>
<feature type="binding site" description="axial binding residue" evidence="2">
    <location>
        <position position="97"/>
    </location>
    <ligand>
        <name>heme b</name>
        <dbReference type="ChEBI" id="CHEBI:60344"/>
        <label>b566</label>
    </ligand>
    <ligandPart>
        <name>Fe</name>
        <dbReference type="ChEBI" id="CHEBI:18248"/>
    </ligandPart>
</feature>
<feature type="binding site" description="axial binding residue" evidence="2">
    <location>
        <position position="182"/>
    </location>
    <ligand>
        <name>heme b</name>
        <dbReference type="ChEBI" id="CHEBI:60344"/>
        <label>b562</label>
    </ligand>
    <ligandPart>
        <name>Fe</name>
        <dbReference type="ChEBI" id="CHEBI:18248"/>
    </ligandPart>
</feature>
<feature type="binding site" description="axial binding residue" evidence="2">
    <location>
        <position position="196"/>
    </location>
    <ligand>
        <name>heme b</name>
        <dbReference type="ChEBI" id="CHEBI:60344"/>
        <label>b566</label>
    </ligand>
    <ligandPart>
        <name>Fe</name>
        <dbReference type="ChEBI" id="CHEBI:18248"/>
    </ligandPart>
</feature>
<feature type="binding site" evidence="2">
    <location>
        <position position="201"/>
    </location>
    <ligand>
        <name>a ubiquinone</name>
        <dbReference type="ChEBI" id="CHEBI:16389"/>
    </ligand>
</feature>
<protein>
    <recommendedName>
        <fullName>Cytochrome b</fullName>
    </recommendedName>
    <alternativeName>
        <fullName>Complex III subunit 3</fullName>
    </alternativeName>
    <alternativeName>
        <fullName>Complex III subunit III</fullName>
    </alternativeName>
    <alternativeName>
        <fullName>Cytochrome b-c1 complex subunit 3</fullName>
    </alternativeName>
    <alternativeName>
        <fullName>Ubiquinol-cytochrome-c reductase complex cytochrome b subunit</fullName>
    </alternativeName>
</protein>
<sequence>MTNIRKNHPLLKIINNSFIDLPTPPNISSLWNFGSLLGACLTIQIITGLFLAMHYTADTTTAFSSVTHICRDVNYGWAIRYIHANGASMFFLCLFAHVGRGLYYGSFTLLETWNVGIILLFSVMATAFMGYVLPWGQMSFWGATVITNLLSAFPYVGTDLVEWIWGGFSVGKATLTRFFALHFILPFIISALVMIHLLFLHETGSNNPLGTSSNSDKIPFHPYYTTKDFLGLLLLMLLLMTLTFFYPDLLGDPDNYTPANPLNTPPHIKPEWYFLFAYAILRSIPNKLGGVMALILSILILAIIPLLQPNKQQTMMFRPLSQFLFWILVADLLTLTWIGGQPVEDPFINIGQMASILYFSLMIFIMPMTCLIENKMLKW</sequence>
<comment type="function">
    <text evidence="2">Component of the ubiquinol-cytochrome c reductase complex (complex III or cytochrome b-c1 complex) that is part of the mitochondrial respiratory chain. The b-c1 complex mediates electron transfer from ubiquinol to cytochrome c. Contributes to the generation of a proton gradient across the mitochondrial membrane that is then used for ATP synthesis.</text>
</comment>
<comment type="cofactor">
    <cofactor evidence="2">
        <name>heme b</name>
        <dbReference type="ChEBI" id="CHEBI:60344"/>
    </cofactor>
    <text evidence="2">Binds 2 heme b groups non-covalently.</text>
</comment>
<comment type="subunit">
    <text evidence="2">The cytochrome bc1 complex contains 11 subunits: 3 respiratory subunits (MT-CYB, CYC1 and UQCRFS1), 2 core proteins (UQCRC1 and UQCRC2) and 6 low-molecular weight proteins (UQCRH/QCR6, UQCRB/QCR7, UQCRQ/QCR8, UQCR10/QCR9, UQCR11/QCR10 and a cleavage product of UQCRFS1). This cytochrome bc1 complex then forms a dimer.</text>
</comment>
<comment type="subcellular location">
    <subcellularLocation>
        <location evidence="2">Mitochondrion inner membrane</location>
        <topology evidence="2">Multi-pass membrane protein</topology>
    </subcellularLocation>
</comment>
<comment type="miscellaneous">
    <text evidence="1">Heme 1 (or BL or b562) is low-potential and absorbs at about 562 nm, and heme 2 (or BH or b566) is high-potential and absorbs at about 566 nm.</text>
</comment>
<comment type="similarity">
    <text evidence="3 4">Belongs to the cytochrome b family.</text>
</comment>
<comment type="caution">
    <text evidence="2">The full-length protein contains only eight transmembrane helices, not nine as predicted by bioinformatics tools.</text>
</comment>
<evidence type="ECO:0000250" key="1"/>
<evidence type="ECO:0000250" key="2">
    <source>
        <dbReference type="UniProtKB" id="P00157"/>
    </source>
</evidence>
<evidence type="ECO:0000255" key="3">
    <source>
        <dbReference type="PROSITE-ProRule" id="PRU00967"/>
    </source>
</evidence>
<evidence type="ECO:0000255" key="4">
    <source>
        <dbReference type="PROSITE-ProRule" id="PRU00968"/>
    </source>
</evidence>
<organism>
    <name type="scientific">Lepilemur microdon</name>
    <name type="common">Small-toothed sportive lemur</name>
    <dbReference type="NCBI Taxonomy" id="185457"/>
    <lineage>
        <taxon>Eukaryota</taxon>
        <taxon>Metazoa</taxon>
        <taxon>Chordata</taxon>
        <taxon>Craniata</taxon>
        <taxon>Vertebrata</taxon>
        <taxon>Euteleostomi</taxon>
        <taxon>Mammalia</taxon>
        <taxon>Eutheria</taxon>
        <taxon>Euarchontoglires</taxon>
        <taxon>Primates</taxon>
        <taxon>Strepsirrhini</taxon>
        <taxon>Lemuriformes</taxon>
        <taxon>Lepilemuridae</taxon>
        <taxon>Lepilemur</taxon>
    </lineage>
</organism>
<dbReference type="EMBL" id="DQ109008">
    <property type="protein sequence ID" value="AAZ92438.1"/>
    <property type="molecule type" value="Genomic_DNA"/>
</dbReference>
<dbReference type="EMBL" id="DQ109010">
    <property type="protein sequence ID" value="AAZ92440.1"/>
    <property type="molecule type" value="Genomic_DNA"/>
</dbReference>
<dbReference type="SMR" id="Q20K40"/>
<dbReference type="GO" id="GO:0005743">
    <property type="term" value="C:mitochondrial inner membrane"/>
    <property type="evidence" value="ECO:0007669"/>
    <property type="project" value="UniProtKB-SubCell"/>
</dbReference>
<dbReference type="GO" id="GO:0045275">
    <property type="term" value="C:respiratory chain complex III"/>
    <property type="evidence" value="ECO:0007669"/>
    <property type="project" value="InterPro"/>
</dbReference>
<dbReference type="GO" id="GO:0046872">
    <property type="term" value="F:metal ion binding"/>
    <property type="evidence" value="ECO:0007669"/>
    <property type="project" value="UniProtKB-KW"/>
</dbReference>
<dbReference type="GO" id="GO:0008121">
    <property type="term" value="F:ubiquinol-cytochrome-c reductase activity"/>
    <property type="evidence" value="ECO:0007669"/>
    <property type="project" value="InterPro"/>
</dbReference>
<dbReference type="GO" id="GO:0006122">
    <property type="term" value="P:mitochondrial electron transport, ubiquinol to cytochrome c"/>
    <property type="evidence" value="ECO:0007669"/>
    <property type="project" value="TreeGrafter"/>
</dbReference>
<dbReference type="CDD" id="cd00290">
    <property type="entry name" value="cytochrome_b_C"/>
    <property type="match status" value="1"/>
</dbReference>
<dbReference type="CDD" id="cd00284">
    <property type="entry name" value="Cytochrome_b_N"/>
    <property type="match status" value="1"/>
</dbReference>
<dbReference type="FunFam" id="1.20.810.10:FF:000002">
    <property type="entry name" value="Cytochrome b"/>
    <property type="match status" value="1"/>
</dbReference>
<dbReference type="Gene3D" id="1.20.810.10">
    <property type="entry name" value="Cytochrome Bc1 Complex, Chain C"/>
    <property type="match status" value="1"/>
</dbReference>
<dbReference type="InterPro" id="IPR005798">
    <property type="entry name" value="Cyt_b/b6_C"/>
</dbReference>
<dbReference type="InterPro" id="IPR036150">
    <property type="entry name" value="Cyt_b/b6_C_sf"/>
</dbReference>
<dbReference type="InterPro" id="IPR005797">
    <property type="entry name" value="Cyt_b/b6_N"/>
</dbReference>
<dbReference type="InterPro" id="IPR027387">
    <property type="entry name" value="Cytb/b6-like_sf"/>
</dbReference>
<dbReference type="InterPro" id="IPR030689">
    <property type="entry name" value="Cytochrome_b"/>
</dbReference>
<dbReference type="InterPro" id="IPR048260">
    <property type="entry name" value="Cytochrome_b_C_euk/bac"/>
</dbReference>
<dbReference type="InterPro" id="IPR048259">
    <property type="entry name" value="Cytochrome_b_N_euk/bac"/>
</dbReference>
<dbReference type="InterPro" id="IPR016174">
    <property type="entry name" value="Di-haem_cyt_TM"/>
</dbReference>
<dbReference type="PANTHER" id="PTHR19271">
    <property type="entry name" value="CYTOCHROME B"/>
    <property type="match status" value="1"/>
</dbReference>
<dbReference type="PANTHER" id="PTHR19271:SF16">
    <property type="entry name" value="CYTOCHROME B"/>
    <property type="match status" value="1"/>
</dbReference>
<dbReference type="Pfam" id="PF00032">
    <property type="entry name" value="Cytochrom_B_C"/>
    <property type="match status" value="1"/>
</dbReference>
<dbReference type="Pfam" id="PF00033">
    <property type="entry name" value="Cytochrome_B"/>
    <property type="match status" value="1"/>
</dbReference>
<dbReference type="PIRSF" id="PIRSF038885">
    <property type="entry name" value="COB"/>
    <property type="match status" value="1"/>
</dbReference>
<dbReference type="SUPFAM" id="SSF81648">
    <property type="entry name" value="a domain/subunit of cytochrome bc1 complex (Ubiquinol-cytochrome c reductase)"/>
    <property type="match status" value="1"/>
</dbReference>
<dbReference type="SUPFAM" id="SSF81342">
    <property type="entry name" value="Transmembrane di-heme cytochromes"/>
    <property type="match status" value="1"/>
</dbReference>
<dbReference type="PROSITE" id="PS51003">
    <property type="entry name" value="CYTB_CTER"/>
    <property type="match status" value="1"/>
</dbReference>
<dbReference type="PROSITE" id="PS51002">
    <property type="entry name" value="CYTB_NTER"/>
    <property type="match status" value="1"/>
</dbReference>
<proteinExistence type="inferred from homology"/>
<keyword id="KW-0249">Electron transport</keyword>
<keyword id="KW-0349">Heme</keyword>
<keyword id="KW-0408">Iron</keyword>
<keyword id="KW-0472">Membrane</keyword>
<keyword id="KW-0479">Metal-binding</keyword>
<keyword id="KW-0496">Mitochondrion</keyword>
<keyword id="KW-0999">Mitochondrion inner membrane</keyword>
<keyword id="KW-0679">Respiratory chain</keyword>
<keyword id="KW-0812">Transmembrane</keyword>
<keyword id="KW-1133">Transmembrane helix</keyword>
<keyword id="KW-0813">Transport</keyword>
<keyword id="KW-0830">Ubiquinone</keyword>
<name>CYB_LEPMR</name>
<geneLocation type="mitochondrion"/>
<accession>Q20K40</accession>
<gene>
    <name type="primary">MT-CYB</name>
    <name type="synonym">COB</name>
    <name type="synonym">CYTB</name>
    <name type="synonym">MTCYB</name>
</gene>
<reference key="1">
    <citation type="journal article" date="2006" name="BMC Evol. Biol.">
        <title>Molecular phylogeny and taxonomic revision of the sportive lemurs (Lepilemur, Primates).</title>
        <authorList>
            <person name="Andriaholinirina N."/>
            <person name="Fausser J.-L."/>
            <person name="Roos C."/>
            <person name="Zinner D."/>
            <person name="Thalmann U."/>
            <person name="Rabarivola C."/>
            <person name="Ravoarimanana I."/>
            <person name="Ganzhorn J.U."/>
            <person name="Meier B."/>
            <person name="Hilgartner R."/>
            <person name="Walter L."/>
            <person name="Zaramody A."/>
            <person name="Langer C."/>
            <person name="Hahn T."/>
            <person name="Zimmermann E."/>
            <person name="Radespiel U."/>
            <person name="Craul M."/>
            <person name="Tomiuk J."/>
            <person name="Tattersall I."/>
            <person name="Rumpler Y."/>
        </authorList>
    </citation>
    <scope>NUCLEOTIDE SEQUENCE [GENOMIC DNA]</scope>
</reference>